<name>BRX1_XENLA</name>
<dbReference type="EMBL" id="AF319877">
    <property type="protein sequence ID" value="AAL37175.1"/>
    <property type="molecule type" value="mRNA"/>
</dbReference>
<dbReference type="EMBL" id="BC041554">
    <property type="protein sequence ID" value="AAH41554.1"/>
    <property type="molecule type" value="mRNA"/>
</dbReference>
<dbReference type="SMR" id="Q8UVY2"/>
<dbReference type="AGR" id="Xenbase:XB-GENE-1007998"/>
<dbReference type="Xenbase" id="XB-GENE-1007998">
    <property type="gene designation" value="brix1.S"/>
</dbReference>
<dbReference type="OrthoDB" id="1638493at2759"/>
<dbReference type="Proteomes" id="UP000186698">
    <property type="component" value="Unplaced"/>
</dbReference>
<dbReference type="GO" id="GO:0005730">
    <property type="term" value="C:nucleolus"/>
    <property type="evidence" value="ECO:0000318"/>
    <property type="project" value="GO_Central"/>
</dbReference>
<dbReference type="GO" id="GO:0003723">
    <property type="term" value="F:RNA binding"/>
    <property type="evidence" value="ECO:0000318"/>
    <property type="project" value="GO_Central"/>
</dbReference>
<dbReference type="GO" id="GO:0019843">
    <property type="term" value="F:rRNA binding"/>
    <property type="evidence" value="ECO:0007669"/>
    <property type="project" value="InterPro"/>
</dbReference>
<dbReference type="GO" id="GO:0000027">
    <property type="term" value="P:ribosomal large subunit assembly"/>
    <property type="evidence" value="ECO:0000318"/>
    <property type="project" value="GO_Central"/>
</dbReference>
<dbReference type="GO" id="GO:0006364">
    <property type="term" value="P:rRNA processing"/>
    <property type="evidence" value="ECO:0007669"/>
    <property type="project" value="InterPro"/>
</dbReference>
<dbReference type="FunFam" id="3.40.50.10480:FF:000003">
    <property type="entry name" value="Ribosome biogenesis protein BRX1"/>
    <property type="match status" value="1"/>
</dbReference>
<dbReference type="Gene3D" id="3.40.50.10480">
    <property type="entry name" value="Probable brix-domain ribosomal biogenesis protein"/>
    <property type="match status" value="1"/>
</dbReference>
<dbReference type="InterPro" id="IPR007109">
    <property type="entry name" value="Brix"/>
</dbReference>
<dbReference type="InterPro" id="IPR026532">
    <property type="entry name" value="BRX1"/>
</dbReference>
<dbReference type="PANTHER" id="PTHR13634">
    <property type="entry name" value="RIBOSOME BIOGENESIS PROTEIN BRIX"/>
    <property type="match status" value="1"/>
</dbReference>
<dbReference type="PANTHER" id="PTHR13634:SF0">
    <property type="entry name" value="RIBOSOME BIOGENESIS PROTEIN BRX1 HOMOLOG"/>
    <property type="match status" value="1"/>
</dbReference>
<dbReference type="Pfam" id="PF04427">
    <property type="entry name" value="Brix"/>
    <property type="match status" value="1"/>
</dbReference>
<dbReference type="SMART" id="SM00879">
    <property type="entry name" value="Brix"/>
    <property type="match status" value="1"/>
</dbReference>
<dbReference type="SUPFAM" id="SSF52954">
    <property type="entry name" value="Class II aaRS ABD-related"/>
    <property type="match status" value="1"/>
</dbReference>
<dbReference type="PROSITE" id="PS50833">
    <property type="entry name" value="BRIX"/>
    <property type="match status" value="1"/>
</dbReference>
<sequence>MSAYKRKRGSLPEVATNTKKAKKQLAGSEQEATAGEEFIVPPPVSEGKWKNKERVLIFSSRGINFRTRHLMQDLRSLMPHSRAETKMDRKDKLFVVNEVCEMKNCNKCIYFEAKKKQDLYMWLSNSPEGPSAKFLVQNIHTLAELKMSGNCLKGSRPILSFDPAFDREPQYALLKELLTQIFGTPRYHPRSQPFVDHIFTFSIADNRIWFRNYQIIEEDAALVEIGPRFVLNLIKIFKGSFGGPTLYENPHYQSPNMHRRMIRLATAAKVKEKQQVKEVQKLKKEEDRPVIPVDPTEAVFYTPAEEKPQVIETEPPAPKPKMKRKDKQFKRQRMAKKRM</sequence>
<organism>
    <name type="scientific">Xenopus laevis</name>
    <name type="common">African clawed frog</name>
    <dbReference type="NCBI Taxonomy" id="8355"/>
    <lineage>
        <taxon>Eukaryota</taxon>
        <taxon>Metazoa</taxon>
        <taxon>Chordata</taxon>
        <taxon>Craniata</taxon>
        <taxon>Vertebrata</taxon>
        <taxon>Euteleostomi</taxon>
        <taxon>Amphibia</taxon>
        <taxon>Batrachia</taxon>
        <taxon>Anura</taxon>
        <taxon>Pipoidea</taxon>
        <taxon>Pipidae</taxon>
        <taxon>Xenopodinae</taxon>
        <taxon>Xenopus</taxon>
        <taxon>Xenopus</taxon>
    </lineage>
</organism>
<proteinExistence type="evidence at transcript level"/>
<protein>
    <recommendedName>
        <fullName>Ribosome biogenesis protein BRX1 homolog</fullName>
    </recommendedName>
    <alternativeName>
        <fullName>Brix domain-containing protein 2</fullName>
    </alternativeName>
    <alternativeName>
        <fullName>Bx24</fullName>
    </alternativeName>
</protein>
<reference key="1">
    <citation type="journal article" date="2001" name="Biol. Chem.">
        <title>Brix from Xenopus laevis and brx1p from yeast define a new family of proteins involved in the biogenesis of large ribosomal subunits.</title>
        <authorList>
            <person name="Kaser A."/>
            <person name="Bogengruber E."/>
            <person name="Hallegger M."/>
            <person name="Doppler E."/>
            <person name="Lepperdinger G."/>
            <person name="Jantsch M."/>
            <person name="Breitenbach M."/>
            <person name="Kreil G."/>
        </authorList>
    </citation>
    <scope>NUCLEOTIDE SEQUENCE [MRNA]</scope>
</reference>
<reference key="2">
    <citation type="submission" date="2002-12" db="EMBL/GenBank/DDBJ databases">
        <authorList>
            <consortium name="NIH - Xenopus Gene Collection (XGC) project"/>
        </authorList>
    </citation>
    <scope>NUCLEOTIDE SEQUENCE [LARGE SCALE MRNA] OF 9-339</scope>
    <source>
        <tissue>Embryo</tissue>
    </source>
</reference>
<gene>
    <name type="primary">brix1</name>
    <name type="synonym">brix</name>
    <name type="synonym">bxdc2</name>
</gene>
<feature type="chain" id="PRO_0000120232" description="Ribosome biogenesis protein BRX1 homolog">
    <location>
        <begin position="1"/>
        <end position="339"/>
    </location>
</feature>
<feature type="domain" description="Brix" evidence="1">
    <location>
        <begin position="53"/>
        <end position="242"/>
    </location>
</feature>
<feature type="region of interest" description="Disordered" evidence="2">
    <location>
        <begin position="1"/>
        <end position="34"/>
    </location>
</feature>
<feature type="region of interest" description="Disordered" evidence="2">
    <location>
        <begin position="304"/>
        <end position="339"/>
    </location>
</feature>
<feature type="compositionally biased region" description="Basic residues" evidence="2">
    <location>
        <begin position="320"/>
        <end position="339"/>
    </location>
</feature>
<feature type="sequence conflict" description="In Ref. 2; AAH41554." evidence="3" ref="2">
    <original>V</original>
    <variation>I</variation>
    <location>
        <position position="310"/>
    </location>
</feature>
<feature type="sequence conflict" description="In Ref. 2; AAH41554." evidence="3" ref="2">
    <original>T</original>
    <variation>N</variation>
    <location>
        <position position="313"/>
    </location>
</feature>
<comment type="function">
    <text>Required for biogenesis of the 60S ribosomal subunit.</text>
</comment>
<comment type="subcellular location">
    <subcellularLocation>
        <location>Nucleus</location>
        <location>Nucleolus</location>
    </subcellularLocation>
</comment>
<comment type="tissue specificity">
    <text>Ubiquitous.</text>
</comment>
<comment type="similarity">
    <text evidence="3">Belongs to the BRX1 family.</text>
</comment>
<evidence type="ECO:0000255" key="1">
    <source>
        <dbReference type="PROSITE-ProRule" id="PRU00034"/>
    </source>
</evidence>
<evidence type="ECO:0000256" key="2">
    <source>
        <dbReference type="SAM" id="MobiDB-lite"/>
    </source>
</evidence>
<evidence type="ECO:0000305" key="3"/>
<accession>Q8UVY2</accession>
<accession>Q8AVP3</accession>
<keyword id="KW-0539">Nucleus</keyword>
<keyword id="KW-1185">Reference proteome</keyword>
<keyword id="KW-0690">Ribosome biogenesis</keyword>